<gene>
    <name evidence="1" type="primary">rbfA</name>
    <name type="ordered locus">MT2904</name>
</gene>
<feature type="chain" id="PRO_0000428173" description="Ribosome-binding factor A">
    <location>
        <begin position="1"/>
        <end position="183"/>
    </location>
</feature>
<feature type="region of interest" description="Disordered" evidence="2">
    <location>
        <begin position="132"/>
        <end position="183"/>
    </location>
</feature>
<proteinExistence type="inferred from homology"/>
<dbReference type="EMBL" id="AE000516">
    <property type="protein sequence ID" value="AAK47230.1"/>
    <property type="molecule type" value="Genomic_DNA"/>
</dbReference>
<dbReference type="PIR" id="A70694">
    <property type="entry name" value="A70694"/>
</dbReference>
<dbReference type="RefSeq" id="WP_003414508.1">
    <property type="nucleotide sequence ID" value="NZ_KK341227.1"/>
</dbReference>
<dbReference type="SMR" id="P9WHJ6"/>
<dbReference type="KEGG" id="mtc:MT2904"/>
<dbReference type="PATRIC" id="fig|83331.31.peg.3137"/>
<dbReference type="HOGENOM" id="CLU_089475_0_0_11"/>
<dbReference type="Proteomes" id="UP000001020">
    <property type="component" value="Chromosome"/>
</dbReference>
<dbReference type="GO" id="GO:0005829">
    <property type="term" value="C:cytosol"/>
    <property type="evidence" value="ECO:0007669"/>
    <property type="project" value="TreeGrafter"/>
</dbReference>
<dbReference type="GO" id="GO:0043024">
    <property type="term" value="F:ribosomal small subunit binding"/>
    <property type="evidence" value="ECO:0007669"/>
    <property type="project" value="TreeGrafter"/>
</dbReference>
<dbReference type="GO" id="GO:0030490">
    <property type="term" value="P:maturation of SSU-rRNA"/>
    <property type="evidence" value="ECO:0007669"/>
    <property type="project" value="UniProtKB-UniRule"/>
</dbReference>
<dbReference type="FunFam" id="3.30.300.20:FF:000018">
    <property type="entry name" value="Ribosome-binding factor A"/>
    <property type="match status" value="1"/>
</dbReference>
<dbReference type="Gene3D" id="3.30.300.20">
    <property type="match status" value="1"/>
</dbReference>
<dbReference type="HAMAP" id="MF_00003">
    <property type="entry name" value="RbfA"/>
    <property type="match status" value="1"/>
</dbReference>
<dbReference type="InterPro" id="IPR015946">
    <property type="entry name" value="KH_dom-like_a/b"/>
</dbReference>
<dbReference type="InterPro" id="IPR000238">
    <property type="entry name" value="RbfA"/>
</dbReference>
<dbReference type="InterPro" id="IPR023799">
    <property type="entry name" value="RbfA_dom_sf"/>
</dbReference>
<dbReference type="InterPro" id="IPR020053">
    <property type="entry name" value="Ribosome-bd_factorA_CS"/>
</dbReference>
<dbReference type="NCBIfam" id="TIGR00082">
    <property type="entry name" value="rbfA"/>
    <property type="match status" value="1"/>
</dbReference>
<dbReference type="PANTHER" id="PTHR33515">
    <property type="entry name" value="RIBOSOME-BINDING FACTOR A, CHLOROPLASTIC-RELATED"/>
    <property type="match status" value="1"/>
</dbReference>
<dbReference type="PANTHER" id="PTHR33515:SF1">
    <property type="entry name" value="RIBOSOME-BINDING FACTOR A, CHLOROPLASTIC-RELATED"/>
    <property type="match status" value="1"/>
</dbReference>
<dbReference type="Pfam" id="PF02033">
    <property type="entry name" value="RBFA"/>
    <property type="match status" value="1"/>
</dbReference>
<dbReference type="SUPFAM" id="SSF89919">
    <property type="entry name" value="Ribosome-binding factor A, RbfA"/>
    <property type="match status" value="1"/>
</dbReference>
<dbReference type="PROSITE" id="PS01319">
    <property type="entry name" value="RBFA"/>
    <property type="match status" value="1"/>
</dbReference>
<evidence type="ECO:0000255" key="1">
    <source>
        <dbReference type="HAMAP-Rule" id="MF_00003"/>
    </source>
</evidence>
<evidence type="ECO:0000256" key="2">
    <source>
        <dbReference type="SAM" id="MobiDB-lite"/>
    </source>
</evidence>
<accession>P9WHJ6</accession>
<accession>L0TCE1</accession>
<accession>P65964</accession>
<accession>P71614</accession>
<comment type="function">
    <text evidence="1">One of several proteins that assist in the late maturation steps of the functional core of the 30S ribosomal subunit. Associates with free 30S ribosomal subunits (but not with 30S subunits that are part of 70S ribosomes or polysomes). Required for efficient processing of 16S rRNA. May interact with the 5'-terminal helix region of 16S rRNA.</text>
</comment>
<comment type="subunit">
    <text evidence="1">Monomer. Binds 30S ribosomal subunits, but not 50S ribosomal subunits or 70S ribosomes.</text>
</comment>
<comment type="subcellular location">
    <subcellularLocation>
        <location evidence="1">Cytoplasm</location>
    </subcellularLocation>
</comment>
<comment type="similarity">
    <text evidence="1">Belongs to the RbfA family.</text>
</comment>
<organism>
    <name type="scientific">Mycobacterium tuberculosis (strain CDC 1551 / Oshkosh)</name>
    <dbReference type="NCBI Taxonomy" id="83331"/>
    <lineage>
        <taxon>Bacteria</taxon>
        <taxon>Bacillati</taxon>
        <taxon>Actinomycetota</taxon>
        <taxon>Actinomycetes</taxon>
        <taxon>Mycobacteriales</taxon>
        <taxon>Mycobacteriaceae</taxon>
        <taxon>Mycobacterium</taxon>
        <taxon>Mycobacterium tuberculosis complex</taxon>
    </lineage>
</organism>
<sequence length="183" mass="18998">MADAARARRLAKRIAAIVASAIEYEIKDPGLAGVTITDAKVTADLHDATVYYTVMGRTLHDEPNCAGAAAALERAKGVLRTKVGAGTGVRFTPTLTFTLDTISDSVHRMDELLARARAADADLARVRVGAKPAGEADPYRDNGSVAQSPAPGGLGIRTSDGPEAVEAPLTCGGDTGDDDRPKE</sequence>
<protein>
    <recommendedName>
        <fullName evidence="1">Ribosome-binding factor A</fullName>
    </recommendedName>
</protein>
<reference key="1">
    <citation type="journal article" date="2002" name="J. Bacteriol.">
        <title>Whole-genome comparison of Mycobacterium tuberculosis clinical and laboratory strains.</title>
        <authorList>
            <person name="Fleischmann R.D."/>
            <person name="Alland D."/>
            <person name="Eisen J.A."/>
            <person name="Carpenter L."/>
            <person name="White O."/>
            <person name="Peterson J.D."/>
            <person name="DeBoy R.T."/>
            <person name="Dodson R.J."/>
            <person name="Gwinn M.L."/>
            <person name="Haft D.H."/>
            <person name="Hickey E.K."/>
            <person name="Kolonay J.F."/>
            <person name="Nelson W.C."/>
            <person name="Umayam L.A."/>
            <person name="Ermolaeva M.D."/>
            <person name="Salzberg S.L."/>
            <person name="Delcher A."/>
            <person name="Utterback T.R."/>
            <person name="Weidman J.F."/>
            <person name="Khouri H.M."/>
            <person name="Gill J."/>
            <person name="Mikula A."/>
            <person name="Bishai W."/>
            <person name="Jacobs W.R. Jr."/>
            <person name="Venter J.C."/>
            <person name="Fraser C.M."/>
        </authorList>
    </citation>
    <scope>NUCLEOTIDE SEQUENCE [LARGE SCALE GENOMIC DNA]</scope>
    <source>
        <strain>CDC 1551 / Oshkosh</strain>
    </source>
</reference>
<keyword id="KW-0963">Cytoplasm</keyword>
<keyword id="KW-1185">Reference proteome</keyword>
<keyword id="KW-0690">Ribosome biogenesis</keyword>
<name>RBFA_MYCTO</name>